<sequence length="248" mass="25274">MRKKLVAGNWKMHGSLAENAALLAALKPALQGIEAAVCVPFPYLAQVQTALAGSSLAWGAQNVSEHGKGAFTGEVSASMLLDFGCKYVIVGHSERRSLYGESDALVAAKYMAAQAAGLTPILCVGESLAERESGVTEQVVARQLDAVVAAAGIASLARAVVAYEPVWAIGTGKTASPEQAQAVHAFIRGKLADLDAAVAAGLIIQYGGSVKAANAAELMAQPDIDGGLIGGASLLADEFVAICRAAAK</sequence>
<organism>
    <name type="scientific">Thiobacillus denitrificans (strain ATCC 25259 / T1)</name>
    <dbReference type="NCBI Taxonomy" id="292415"/>
    <lineage>
        <taxon>Bacteria</taxon>
        <taxon>Pseudomonadati</taxon>
        <taxon>Pseudomonadota</taxon>
        <taxon>Betaproteobacteria</taxon>
        <taxon>Nitrosomonadales</taxon>
        <taxon>Thiobacillaceae</taxon>
        <taxon>Thiobacillus</taxon>
    </lineage>
</organism>
<keyword id="KW-0963">Cytoplasm</keyword>
<keyword id="KW-0312">Gluconeogenesis</keyword>
<keyword id="KW-0324">Glycolysis</keyword>
<keyword id="KW-0413">Isomerase</keyword>
<keyword id="KW-1185">Reference proteome</keyword>
<feature type="chain" id="PRO_0000307591" description="Triosephosphate isomerase">
    <location>
        <begin position="1"/>
        <end position="248"/>
    </location>
</feature>
<feature type="active site" description="Electrophile" evidence="1">
    <location>
        <position position="92"/>
    </location>
</feature>
<feature type="active site" description="Proton acceptor" evidence="1">
    <location>
        <position position="164"/>
    </location>
</feature>
<feature type="binding site" evidence="1">
    <location>
        <begin position="9"/>
        <end position="11"/>
    </location>
    <ligand>
        <name>substrate</name>
    </ligand>
</feature>
<feature type="binding site" evidence="1">
    <location>
        <position position="170"/>
    </location>
    <ligand>
        <name>substrate</name>
    </ligand>
</feature>
<feature type="binding site" evidence="1">
    <location>
        <position position="209"/>
    </location>
    <ligand>
        <name>substrate</name>
    </ligand>
</feature>
<feature type="binding site" evidence="1">
    <location>
        <begin position="230"/>
        <end position="231"/>
    </location>
    <ligand>
        <name>substrate</name>
    </ligand>
</feature>
<dbReference type="EC" id="5.3.1.1" evidence="1"/>
<dbReference type="EMBL" id="CP000116">
    <property type="protein sequence ID" value="AAZ97093.1"/>
    <property type="molecule type" value="Genomic_DNA"/>
</dbReference>
<dbReference type="RefSeq" id="WP_011311652.1">
    <property type="nucleotide sequence ID" value="NC_007404.1"/>
</dbReference>
<dbReference type="SMR" id="Q3SJQ7"/>
<dbReference type="STRING" id="292415.Tbd_1140"/>
<dbReference type="KEGG" id="tbd:Tbd_1140"/>
<dbReference type="eggNOG" id="COG0149">
    <property type="taxonomic scope" value="Bacteria"/>
</dbReference>
<dbReference type="HOGENOM" id="CLU_024251_2_1_4"/>
<dbReference type="OrthoDB" id="9809429at2"/>
<dbReference type="UniPathway" id="UPA00109">
    <property type="reaction ID" value="UER00189"/>
</dbReference>
<dbReference type="UniPathway" id="UPA00138"/>
<dbReference type="Proteomes" id="UP000008291">
    <property type="component" value="Chromosome"/>
</dbReference>
<dbReference type="GO" id="GO:0005829">
    <property type="term" value="C:cytosol"/>
    <property type="evidence" value="ECO:0007669"/>
    <property type="project" value="TreeGrafter"/>
</dbReference>
<dbReference type="GO" id="GO:0004807">
    <property type="term" value="F:triose-phosphate isomerase activity"/>
    <property type="evidence" value="ECO:0007669"/>
    <property type="project" value="UniProtKB-UniRule"/>
</dbReference>
<dbReference type="GO" id="GO:0006094">
    <property type="term" value="P:gluconeogenesis"/>
    <property type="evidence" value="ECO:0007669"/>
    <property type="project" value="UniProtKB-UniRule"/>
</dbReference>
<dbReference type="GO" id="GO:0046166">
    <property type="term" value="P:glyceraldehyde-3-phosphate biosynthetic process"/>
    <property type="evidence" value="ECO:0007669"/>
    <property type="project" value="TreeGrafter"/>
</dbReference>
<dbReference type="GO" id="GO:0019563">
    <property type="term" value="P:glycerol catabolic process"/>
    <property type="evidence" value="ECO:0007669"/>
    <property type="project" value="TreeGrafter"/>
</dbReference>
<dbReference type="GO" id="GO:0006096">
    <property type="term" value="P:glycolytic process"/>
    <property type="evidence" value="ECO:0007669"/>
    <property type="project" value="UniProtKB-UniRule"/>
</dbReference>
<dbReference type="CDD" id="cd00311">
    <property type="entry name" value="TIM"/>
    <property type="match status" value="1"/>
</dbReference>
<dbReference type="FunFam" id="3.20.20.70:FF:000020">
    <property type="entry name" value="Triosephosphate isomerase"/>
    <property type="match status" value="1"/>
</dbReference>
<dbReference type="Gene3D" id="3.20.20.70">
    <property type="entry name" value="Aldolase class I"/>
    <property type="match status" value="1"/>
</dbReference>
<dbReference type="HAMAP" id="MF_00147_B">
    <property type="entry name" value="TIM_B"/>
    <property type="match status" value="1"/>
</dbReference>
<dbReference type="InterPro" id="IPR013785">
    <property type="entry name" value="Aldolase_TIM"/>
</dbReference>
<dbReference type="InterPro" id="IPR035990">
    <property type="entry name" value="TIM_sf"/>
</dbReference>
<dbReference type="InterPro" id="IPR022896">
    <property type="entry name" value="TrioseP_Isoase_bac/euk"/>
</dbReference>
<dbReference type="InterPro" id="IPR000652">
    <property type="entry name" value="Triosephosphate_isomerase"/>
</dbReference>
<dbReference type="InterPro" id="IPR020861">
    <property type="entry name" value="Triosephosphate_isomerase_AS"/>
</dbReference>
<dbReference type="NCBIfam" id="TIGR00419">
    <property type="entry name" value="tim"/>
    <property type="match status" value="1"/>
</dbReference>
<dbReference type="PANTHER" id="PTHR21139">
    <property type="entry name" value="TRIOSEPHOSPHATE ISOMERASE"/>
    <property type="match status" value="1"/>
</dbReference>
<dbReference type="PANTHER" id="PTHR21139:SF42">
    <property type="entry name" value="TRIOSEPHOSPHATE ISOMERASE"/>
    <property type="match status" value="1"/>
</dbReference>
<dbReference type="Pfam" id="PF00121">
    <property type="entry name" value="TIM"/>
    <property type="match status" value="1"/>
</dbReference>
<dbReference type="SUPFAM" id="SSF51351">
    <property type="entry name" value="Triosephosphate isomerase (TIM)"/>
    <property type="match status" value="1"/>
</dbReference>
<dbReference type="PROSITE" id="PS00171">
    <property type="entry name" value="TIM_1"/>
    <property type="match status" value="1"/>
</dbReference>
<dbReference type="PROSITE" id="PS51440">
    <property type="entry name" value="TIM_2"/>
    <property type="match status" value="1"/>
</dbReference>
<gene>
    <name evidence="1" type="primary">tpiA</name>
    <name type="ordered locus">Tbd_1140</name>
</gene>
<name>TPIS_THIDA</name>
<comment type="function">
    <text evidence="1">Involved in the gluconeogenesis. Catalyzes stereospecifically the conversion of dihydroxyacetone phosphate (DHAP) to D-glyceraldehyde-3-phosphate (G3P).</text>
</comment>
<comment type="catalytic activity">
    <reaction evidence="1">
        <text>D-glyceraldehyde 3-phosphate = dihydroxyacetone phosphate</text>
        <dbReference type="Rhea" id="RHEA:18585"/>
        <dbReference type="ChEBI" id="CHEBI:57642"/>
        <dbReference type="ChEBI" id="CHEBI:59776"/>
        <dbReference type="EC" id="5.3.1.1"/>
    </reaction>
</comment>
<comment type="pathway">
    <text evidence="1">Carbohydrate biosynthesis; gluconeogenesis.</text>
</comment>
<comment type="pathway">
    <text evidence="1">Carbohydrate degradation; glycolysis; D-glyceraldehyde 3-phosphate from glycerone phosphate: step 1/1.</text>
</comment>
<comment type="subunit">
    <text evidence="1">Homodimer.</text>
</comment>
<comment type="subcellular location">
    <subcellularLocation>
        <location evidence="1">Cytoplasm</location>
    </subcellularLocation>
</comment>
<comment type="similarity">
    <text evidence="1">Belongs to the triosephosphate isomerase family.</text>
</comment>
<reference key="1">
    <citation type="journal article" date="2006" name="J. Bacteriol.">
        <title>The genome sequence of the obligately chemolithoautotrophic, facultatively anaerobic bacterium Thiobacillus denitrificans.</title>
        <authorList>
            <person name="Beller H.R."/>
            <person name="Chain P.S."/>
            <person name="Letain T.E."/>
            <person name="Chakicherla A."/>
            <person name="Larimer F.W."/>
            <person name="Richardson P.M."/>
            <person name="Coleman M.A."/>
            <person name="Wood A.P."/>
            <person name="Kelly D.P."/>
        </authorList>
    </citation>
    <scope>NUCLEOTIDE SEQUENCE [LARGE SCALE GENOMIC DNA]</scope>
    <source>
        <strain>ATCC 25259 / T1</strain>
    </source>
</reference>
<accession>Q3SJQ7</accession>
<protein>
    <recommendedName>
        <fullName evidence="1">Triosephosphate isomerase</fullName>
        <shortName evidence="1">TIM</shortName>
        <shortName evidence="1">TPI</shortName>
        <ecNumber evidence="1">5.3.1.1</ecNumber>
    </recommendedName>
    <alternativeName>
        <fullName evidence="1">Triose-phosphate isomerase</fullName>
    </alternativeName>
</protein>
<proteinExistence type="inferred from homology"/>
<evidence type="ECO:0000255" key="1">
    <source>
        <dbReference type="HAMAP-Rule" id="MF_00147"/>
    </source>
</evidence>